<protein>
    <recommendedName>
        <fullName evidence="3">Large ribosomal subunit protein uL24</fullName>
    </recommendedName>
    <alternativeName>
        <fullName>50S ribosomal protein L24</fullName>
    </alternativeName>
</protein>
<proteinExistence type="evidence at protein level"/>
<keyword id="KW-0002">3D-structure</keyword>
<keyword id="KW-0903">Direct protein sequencing</keyword>
<keyword id="KW-1185">Reference proteome</keyword>
<keyword id="KW-0687">Ribonucleoprotein</keyword>
<keyword id="KW-0689">Ribosomal protein</keyword>
<keyword id="KW-0694">RNA-binding</keyword>
<keyword id="KW-0699">rRNA-binding</keyword>
<name>RL24_THET8</name>
<gene>
    <name type="primary">rplX</name>
    <name type="ordered locus">TTHA1681</name>
</gene>
<dbReference type="EMBL" id="AP008226">
    <property type="protein sequence ID" value="BAD71504.1"/>
    <property type="molecule type" value="Genomic_DNA"/>
</dbReference>
<dbReference type="RefSeq" id="WP_011173707.1">
    <property type="nucleotide sequence ID" value="NC_006461.1"/>
</dbReference>
<dbReference type="RefSeq" id="YP_144947.1">
    <property type="nucleotide sequence ID" value="NC_006461.1"/>
</dbReference>
<dbReference type="PDB" id="1VVJ">
    <property type="method" value="X-ray"/>
    <property type="resolution" value="3.44 A"/>
    <property type="chains" value="RY/YY=1-110"/>
</dbReference>
<dbReference type="PDB" id="1VY4">
    <property type="method" value="X-ray"/>
    <property type="resolution" value="2.60 A"/>
    <property type="chains" value="BY/DY=1-110"/>
</dbReference>
<dbReference type="PDB" id="1VY5">
    <property type="method" value="X-ray"/>
    <property type="resolution" value="2.55 A"/>
    <property type="chains" value="BY/DY=1-110"/>
</dbReference>
<dbReference type="PDB" id="1VY6">
    <property type="method" value="X-ray"/>
    <property type="resolution" value="2.90 A"/>
    <property type="chains" value="BY/DY=1-110"/>
</dbReference>
<dbReference type="PDB" id="1VY7">
    <property type="method" value="X-ray"/>
    <property type="resolution" value="2.80 A"/>
    <property type="chains" value="BY/DY=1-110"/>
</dbReference>
<dbReference type="PDB" id="4L47">
    <property type="method" value="X-ray"/>
    <property type="resolution" value="3.22 A"/>
    <property type="chains" value="RY/YY=1-110"/>
</dbReference>
<dbReference type="PDB" id="4L71">
    <property type="method" value="X-ray"/>
    <property type="resolution" value="3.90 A"/>
    <property type="chains" value="RY/YY=1-110"/>
</dbReference>
<dbReference type="PDB" id="4LEL">
    <property type="method" value="X-ray"/>
    <property type="resolution" value="3.90 A"/>
    <property type="chains" value="RY/YY=1-110"/>
</dbReference>
<dbReference type="PDB" id="4LFZ">
    <property type="method" value="X-ray"/>
    <property type="resolution" value="3.92 A"/>
    <property type="chains" value="RY/YY=1-110"/>
</dbReference>
<dbReference type="PDB" id="4LNT">
    <property type="method" value="X-ray"/>
    <property type="resolution" value="2.94 A"/>
    <property type="chains" value="RY/YY=1-110"/>
</dbReference>
<dbReference type="PDB" id="4LSK">
    <property type="method" value="X-ray"/>
    <property type="resolution" value="3.48 A"/>
    <property type="chains" value="RY/YY=1-110"/>
</dbReference>
<dbReference type="PDB" id="4LT8">
    <property type="method" value="X-ray"/>
    <property type="resolution" value="3.14 A"/>
    <property type="chains" value="RY/YY=1-110"/>
</dbReference>
<dbReference type="PDB" id="4P6F">
    <property type="method" value="X-ray"/>
    <property type="resolution" value="3.60 A"/>
    <property type="chains" value="RY/YY=1-110"/>
</dbReference>
<dbReference type="PDB" id="4P70">
    <property type="method" value="X-ray"/>
    <property type="resolution" value="3.68 A"/>
    <property type="chains" value="RY/YY=1-110"/>
</dbReference>
<dbReference type="PDB" id="4TUA">
    <property type="method" value="X-ray"/>
    <property type="resolution" value="3.60 A"/>
    <property type="chains" value="RY/YY=1-110"/>
</dbReference>
<dbReference type="PDB" id="4TUB">
    <property type="method" value="X-ray"/>
    <property type="resolution" value="3.60 A"/>
    <property type="chains" value="RY/YY=1-110"/>
</dbReference>
<dbReference type="PDB" id="4TUC">
    <property type="method" value="X-ray"/>
    <property type="resolution" value="3.60 A"/>
    <property type="chains" value="RY/YY=1-110"/>
</dbReference>
<dbReference type="PDB" id="4TUD">
    <property type="method" value="X-ray"/>
    <property type="resolution" value="3.60 A"/>
    <property type="chains" value="RY/YY=1-110"/>
</dbReference>
<dbReference type="PDB" id="4TUE">
    <property type="method" value="X-ray"/>
    <property type="resolution" value="3.50 A"/>
    <property type="chains" value="RY/YY=1-110"/>
</dbReference>
<dbReference type="PDB" id="4V42">
    <property type="method" value="X-ray"/>
    <property type="resolution" value="5.50 A"/>
    <property type="chains" value="BU=1-110"/>
</dbReference>
<dbReference type="PDB" id="4V4P">
    <property type="method" value="X-ray"/>
    <property type="resolution" value="5.50 A"/>
    <property type="chains" value="U=65-68"/>
</dbReference>
<dbReference type="PDB" id="4V4X">
    <property type="method" value="X-ray"/>
    <property type="resolution" value="5.00 A"/>
    <property type="chains" value="BX=1-110"/>
</dbReference>
<dbReference type="PDB" id="4V4Y">
    <property type="method" value="X-ray"/>
    <property type="resolution" value="5.50 A"/>
    <property type="chains" value="BX=1-110"/>
</dbReference>
<dbReference type="PDB" id="4V4Z">
    <property type="method" value="X-ray"/>
    <property type="resolution" value="4.51 A"/>
    <property type="chains" value="BX=1-110"/>
</dbReference>
<dbReference type="PDB" id="4V51">
    <property type="method" value="X-ray"/>
    <property type="resolution" value="2.80 A"/>
    <property type="chains" value="BY/DY=1-110"/>
</dbReference>
<dbReference type="PDB" id="4V5A">
    <property type="method" value="X-ray"/>
    <property type="resolution" value="3.50 A"/>
    <property type="chains" value="BY/DY=1-110"/>
</dbReference>
<dbReference type="PDB" id="4V5C">
    <property type="method" value="X-ray"/>
    <property type="resolution" value="3.30 A"/>
    <property type="chains" value="BY/DY=1-110"/>
</dbReference>
<dbReference type="PDB" id="4V5D">
    <property type="method" value="X-ray"/>
    <property type="resolution" value="3.50 A"/>
    <property type="chains" value="BY/DY=1-110"/>
</dbReference>
<dbReference type="PDB" id="4V5E">
    <property type="method" value="X-ray"/>
    <property type="resolution" value="3.45 A"/>
    <property type="chains" value="BY/DY=1-110"/>
</dbReference>
<dbReference type="PDB" id="4V5F">
    <property type="method" value="X-ray"/>
    <property type="resolution" value="3.60 A"/>
    <property type="chains" value="BY/DY=1-110"/>
</dbReference>
<dbReference type="PDB" id="4V5G">
    <property type="method" value="X-ray"/>
    <property type="resolution" value="3.60 A"/>
    <property type="chains" value="BY/DY=1-110"/>
</dbReference>
<dbReference type="PDB" id="4V5J">
    <property type="method" value="X-ray"/>
    <property type="resolution" value="3.10 A"/>
    <property type="chains" value="BY/DY=1-110"/>
</dbReference>
<dbReference type="PDB" id="4V5K">
    <property type="method" value="X-ray"/>
    <property type="resolution" value="3.20 A"/>
    <property type="chains" value="BY/DY=1-110"/>
</dbReference>
<dbReference type="PDB" id="4V5L">
    <property type="method" value="X-ray"/>
    <property type="resolution" value="3.10 A"/>
    <property type="chains" value="BY=1-110"/>
</dbReference>
<dbReference type="PDB" id="4V5M">
    <property type="method" value="EM"/>
    <property type="resolution" value="7.80 A"/>
    <property type="chains" value="BY=1-110"/>
</dbReference>
<dbReference type="PDB" id="4V5N">
    <property type="method" value="EM"/>
    <property type="resolution" value="7.60 A"/>
    <property type="chains" value="BY=1-110"/>
</dbReference>
<dbReference type="PDB" id="4V5P">
    <property type="method" value="X-ray"/>
    <property type="resolution" value="3.10 A"/>
    <property type="chains" value="BY/DY=1-110"/>
</dbReference>
<dbReference type="PDB" id="4V5Q">
    <property type="method" value="X-ray"/>
    <property type="resolution" value="3.10 A"/>
    <property type="chains" value="BY/DY=1-110"/>
</dbReference>
<dbReference type="PDB" id="4V5R">
    <property type="method" value="X-ray"/>
    <property type="resolution" value="3.10 A"/>
    <property type="chains" value="BY/DY=1-110"/>
</dbReference>
<dbReference type="PDB" id="4V5S">
    <property type="method" value="X-ray"/>
    <property type="resolution" value="3.10 A"/>
    <property type="chains" value="BY/DY=1-110"/>
</dbReference>
<dbReference type="PDB" id="4V68">
    <property type="method" value="EM"/>
    <property type="resolution" value="6.40 A"/>
    <property type="chains" value="BY=2-102"/>
</dbReference>
<dbReference type="PDB" id="4V6A">
    <property type="method" value="X-ray"/>
    <property type="resolution" value="3.10 A"/>
    <property type="chains" value="BY/DY=1-110"/>
</dbReference>
<dbReference type="PDB" id="4V6F">
    <property type="method" value="X-ray"/>
    <property type="resolution" value="3.10 A"/>
    <property type="chains" value="AU/DU=1-110"/>
</dbReference>
<dbReference type="PDB" id="4V6G">
    <property type="method" value="X-ray"/>
    <property type="resolution" value="3.50 A"/>
    <property type="chains" value="BU/DU=1-110"/>
</dbReference>
<dbReference type="PDB" id="4V7J">
    <property type="method" value="X-ray"/>
    <property type="resolution" value="3.30 A"/>
    <property type="chains" value="AY/BY=1-110"/>
</dbReference>
<dbReference type="PDB" id="4V7K">
    <property type="method" value="X-ray"/>
    <property type="resolution" value="3.60 A"/>
    <property type="chains" value="AY/BY=1-110"/>
</dbReference>
<dbReference type="PDB" id="4V7L">
    <property type="method" value="X-ray"/>
    <property type="resolution" value="3.00 A"/>
    <property type="chains" value="BY/DY=1-110"/>
</dbReference>
<dbReference type="PDB" id="4V7M">
    <property type="method" value="X-ray"/>
    <property type="resolution" value="3.45 A"/>
    <property type="chains" value="BY/DY=1-110"/>
</dbReference>
<dbReference type="PDB" id="4V7W">
    <property type="method" value="X-ray"/>
    <property type="resolution" value="3.00 A"/>
    <property type="chains" value="BY/DY=1-110"/>
</dbReference>
<dbReference type="PDB" id="4V7X">
    <property type="method" value="X-ray"/>
    <property type="resolution" value="3.00 A"/>
    <property type="chains" value="BY/DY=1-110"/>
</dbReference>
<dbReference type="PDB" id="4V7Y">
    <property type="method" value="X-ray"/>
    <property type="resolution" value="3.00 A"/>
    <property type="chains" value="BY/DY=1-110"/>
</dbReference>
<dbReference type="PDB" id="4V7Z">
    <property type="method" value="X-ray"/>
    <property type="resolution" value="3.10 A"/>
    <property type="chains" value="BY/DY=1-110"/>
</dbReference>
<dbReference type="PDB" id="4V87">
    <property type="method" value="X-ray"/>
    <property type="resolution" value="3.10 A"/>
    <property type="chains" value="AU/DU=2-103"/>
</dbReference>
<dbReference type="PDB" id="4V8A">
    <property type="method" value="X-ray"/>
    <property type="resolution" value="3.20 A"/>
    <property type="chains" value="AY/BY=1-110"/>
</dbReference>
<dbReference type="PDB" id="4V8B">
    <property type="method" value="X-ray"/>
    <property type="resolution" value="3.00 A"/>
    <property type="chains" value="BU/DU=1-110"/>
</dbReference>
<dbReference type="PDB" id="4V8C">
    <property type="method" value="X-ray"/>
    <property type="resolution" value="3.30 A"/>
    <property type="chains" value="AU/BU=1-110"/>
</dbReference>
<dbReference type="PDB" id="4V8D">
    <property type="method" value="X-ray"/>
    <property type="resolution" value="3.00 A"/>
    <property type="chains" value="BU/DU=1-110"/>
</dbReference>
<dbReference type="PDB" id="4V8E">
    <property type="method" value="X-ray"/>
    <property type="resolution" value="3.30 A"/>
    <property type="chains" value="AU/CU=1-110"/>
</dbReference>
<dbReference type="PDB" id="4V8F">
    <property type="method" value="X-ray"/>
    <property type="resolution" value="3.30 A"/>
    <property type="chains" value="AU/DU=1-110"/>
</dbReference>
<dbReference type="PDB" id="4V8G">
    <property type="method" value="X-ray"/>
    <property type="resolution" value="3.00 A"/>
    <property type="chains" value="BY/DY=1-110"/>
</dbReference>
<dbReference type="PDB" id="4V8H">
    <property type="method" value="X-ray"/>
    <property type="resolution" value="3.10 A"/>
    <property type="chains" value="BY/DY=1-110"/>
</dbReference>
<dbReference type="PDB" id="4V8I">
    <property type="method" value="X-ray"/>
    <property type="resolution" value="2.70 A"/>
    <property type="chains" value="BY/DY=1-110"/>
</dbReference>
<dbReference type="PDB" id="4V8J">
    <property type="method" value="X-ray"/>
    <property type="resolution" value="3.90 A"/>
    <property type="chains" value="BY/DY=1-110"/>
</dbReference>
<dbReference type="PDB" id="4V8N">
    <property type="method" value="X-ray"/>
    <property type="resolution" value="3.10 A"/>
    <property type="chains" value="BY/DY=1-110"/>
</dbReference>
<dbReference type="PDB" id="4V8O">
    <property type="method" value="X-ray"/>
    <property type="resolution" value="3.80 A"/>
    <property type="chains" value="BY=1-110"/>
</dbReference>
<dbReference type="PDB" id="4V8Q">
    <property type="method" value="X-ray"/>
    <property type="resolution" value="3.10 A"/>
    <property type="chains" value="AY=1-110"/>
</dbReference>
<dbReference type="PDB" id="4V8U">
    <property type="method" value="X-ray"/>
    <property type="resolution" value="3.70 A"/>
    <property type="chains" value="BY/DY=1-110"/>
</dbReference>
<dbReference type="PDB" id="4V8X">
    <property type="method" value="X-ray"/>
    <property type="resolution" value="3.35 A"/>
    <property type="chains" value="BY/DY=1-110"/>
</dbReference>
<dbReference type="PDB" id="4V90">
    <property type="method" value="X-ray"/>
    <property type="resolution" value="2.95 A"/>
    <property type="chains" value="BY=2-110"/>
</dbReference>
<dbReference type="PDB" id="4V95">
    <property type="method" value="X-ray"/>
    <property type="resolution" value="3.20 A"/>
    <property type="chains" value="BY/DY=1-110"/>
</dbReference>
<dbReference type="PDB" id="4V97">
    <property type="method" value="X-ray"/>
    <property type="resolution" value="3.52 A"/>
    <property type="chains" value="BY/DY=1-110"/>
</dbReference>
<dbReference type="PDB" id="4V9A">
    <property type="method" value="X-ray"/>
    <property type="resolution" value="3.30 A"/>
    <property type="chains" value="BU/DU=1-110"/>
</dbReference>
<dbReference type="PDB" id="4V9B">
    <property type="method" value="X-ray"/>
    <property type="resolution" value="3.10 A"/>
    <property type="chains" value="BU/DU=1-110"/>
</dbReference>
<dbReference type="PDB" id="4V9H">
    <property type="method" value="X-ray"/>
    <property type="resolution" value="2.86 A"/>
    <property type="chains" value="BY=1-110"/>
</dbReference>
<dbReference type="PDB" id="4V9I">
    <property type="method" value="X-ray"/>
    <property type="resolution" value="3.30 A"/>
    <property type="chains" value="BY/DY=2-101"/>
</dbReference>
<dbReference type="PDB" id="4V9R">
    <property type="method" value="X-ray"/>
    <property type="resolution" value="3.00 A"/>
    <property type="chains" value="BY/DY=1-110"/>
</dbReference>
<dbReference type="PDB" id="4V9S">
    <property type="method" value="X-ray"/>
    <property type="resolution" value="3.10 A"/>
    <property type="chains" value="BY/DY=1-110"/>
</dbReference>
<dbReference type="PDB" id="4W2E">
    <property type="method" value="X-ray"/>
    <property type="resolution" value="2.90 A"/>
    <property type="chains" value="Y=1-110"/>
</dbReference>
<dbReference type="PDB" id="4W2F">
    <property type="method" value="X-ray"/>
    <property type="resolution" value="2.40 A"/>
    <property type="chains" value="BY/DY=1-110"/>
</dbReference>
<dbReference type="PDB" id="4W2G">
    <property type="method" value="X-ray"/>
    <property type="resolution" value="2.55 A"/>
    <property type="chains" value="BY/DY=1-110"/>
</dbReference>
<dbReference type="PDB" id="4W2H">
    <property type="method" value="X-ray"/>
    <property type="resolution" value="2.70 A"/>
    <property type="chains" value="BY/DY=1-110"/>
</dbReference>
<dbReference type="PDB" id="4W2I">
    <property type="method" value="X-ray"/>
    <property type="resolution" value="2.70 A"/>
    <property type="chains" value="BY/DY=1-110"/>
</dbReference>
<dbReference type="PDB" id="4W4G">
    <property type="method" value="X-ray"/>
    <property type="resolution" value="3.30 A"/>
    <property type="chains" value="RY/YY=1-110"/>
</dbReference>
<dbReference type="PDB" id="4WPO">
    <property type="method" value="X-ray"/>
    <property type="resolution" value="2.80 A"/>
    <property type="chains" value="AY/CY=1-110"/>
</dbReference>
<dbReference type="PDB" id="4WQ1">
    <property type="method" value="X-ray"/>
    <property type="resolution" value="3.10 A"/>
    <property type="chains" value="C5/G8=1-110"/>
</dbReference>
<dbReference type="PDB" id="4WQF">
    <property type="method" value="X-ray"/>
    <property type="resolution" value="2.80 A"/>
    <property type="chains" value="AY/CY=1-110"/>
</dbReference>
<dbReference type="PDB" id="4WQR">
    <property type="method" value="X-ray"/>
    <property type="resolution" value="3.15 A"/>
    <property type="chains" value="C5/G8=1-110"/>
</dbReference>
<dbReference type="PDB" id="4WQU">
    <property type="method" value="X-ray"/>
    <property type="resolution" value="2.80 A"/>
    <property type="chains" value="AY/CY=1-110"/>
</dbReference>
<dbReference type="PDB" id="4WQY">
    <property type="method" value="X-ray"/>
    <property type="resolution" value="2.80 A"/>
    <property type="chains" value="AY/CY=1-110"/>
</dbReference>
<dbReference type="PDB" id="4WR6">
    <property type="method" value="X-ray"/>
    <property type="resolution" value="3.05 A"/>
    <property type="chains" value="C5/G8=1-110"/>
</dbReference>
<dbReference type="PDB" id="4WRA">
    <property type="method" value="X-ray"/>
    <property type="resolution" value="3.05 A"/>
    <property type="chains" value="C5/G8=1-110"/>
</dbReference>
<dbReference type="PDB" id="4WRO">
    <property type="method" value="X-ray"/>
    <property type="resolution" value="3.05 A"/>
    <property type="chains" value="G8=1-110"/>
</dbReference>
<dbReference type="PDB" id="4WSD">
    <property type="method" value="X-ray"/>
    <property type="resolution" value="2.95 A"/>
    <property type="chains" value="C5/G8=1-110"/>
</dbReference>
<dbReference type="PDB" id="4WSM">
    <property type="method" value="X-ray"/>
    <property type="resolution" value="3.30 A"/>
    <property type="chains" value="C5/G8=1-110"/>
</dbReference>
<dbReference type="PDB" id="4WT1">
    <property type="method" value="X-ray"/>
    <property type="resolution" value="3.05 A"/>
    <property type="chains" value="C5/G8=1-110"/>
</dbReference>
<dbReference type="PDB" id="4WT8">
    <property type="method" value="X-ray"/>
    <property type="resolution" value="3.40 A"/>
    <property type="chains" value="CY/DY=2-101"/>
</dbReference>
<dbReference type="PDB" id="4WU1">
    <property type="method" value="X-ray"/>
    <property type="resolution" value="3.20 A"/>
    <property type="chains" value="C5/G8=1-110"/>
</dbReference>
<dbReference type="PDB" id="4WZD">
    <property type="method" value="X-ray"/>
    <property type="resolution" value="3.10 A"/>
    <property type="chains" value="C5/G8=1-110"/>
</dbReference>
<dbReference type="PDB" id="4WZO">
    <property type="method" value="X-ray"/>
    <property type="resolution" value="3.30 A"/>
    <property type="chains" value="C5/G8=1-110"/>
</dbReference>
<dbReference type="PDB" id="4Y4O">
    <property type="method" value="X-ray"/>
    <property type="resolution" value="2.30 A"/>
    <property type="chains" value="1Y/2Y=1-110"/>
</dbReference>
<dbReference type="PDB" id="4Y4P">
    <property type="method" value="X-ray"/>
    <property type="resolution" value="2.50 A"/>
    <property type="chains" value="1Y/2Y=1-110"/>
</dbReference>
<dbReference type="PDB" id="4YPB">
    <property type="method" value="X-ray"/>
    <property type="resolution" value="3.40 A"/>
    <property type="chains" value="RY/YY=1-110"/>
</dbReference>
<dbReference type="PDB" id="4YZV">
    <property type="method" value="X-ray"/>
    <property type="resolution" value="3.10 A"/>
    <property type="chains" value="RY/YY=1-110"/>
</dbReference>
<dbReference type="PDB" id="4Z3S">
    <property type="method" value="X-ray"/>
    <property type="resolution" value="2.65 A"/>
    <property type="chains" value="1Y/2Y=1-110"/>
</dbReference>
<dbReference type="PDB" id="4Z8C">
    <property type="method" value="X-ray"/>
    <property type="resolution" value="2.90 A"/>
    <property type="chains" value="1Y/2Y=1-110"/>
</dbReference>
<dbReference type="PDB" id="4ZER">
    <property type="method" value="X-ray"/>
    <property type="resolution" value="3.10 A"/>
    <property type="chains" value="1Y/2Y=1-107"/>
</dbReference>
<dbReference type="PDB" id="4ZSN">
    <property type="method" value="X-ray"/>
    <property type="resolution" value="3.60 A"/>
    <property type="chains" value="RY/YY=1-110"/>
</dbReference>
<dbReference type="PDB" id="5A9Z">
    <property type="method" value="EM"/>
    <property type="resolution" value="4.70 A"/>
    <property type="chains" value="AV=1-110"/>
</dbReference>
<dbReference type="PDB" id="5AA0">
    <property type="method" value="EM"/>
    <property type="resolution" value="5.00 A"/>
    <property type="chains" value="AV=1-110"/>
</dbReference>
<dbReference type="PDB" id="5CZP">
    <property type="method" value="X-ray"/>
    <property type="resolution" value="3.30 A"/>
    <property type="chains" value="RY/YY=1-110"/>
</dbReference>
<dbReference type="PDB" id="5D8B">
    <property type="method" value="X-ray"/>
    <property type="resolution" value="3.63 A"/>
    <property type="chains" value="OB/S=1-110"/>
</dbReference>
<dbReference type="PDB" id="5DFE">
    <property type="method" value="X-ray"/>
    <property type="resolution" value="3.10 A"/>
    <property type="chains" value="RY/YY=1-110"/>
</dbReference>
<dbReference type="PDB" id="5DOX">
    <property type="method" value="X-ray"/>
    <property type="resolution" value="3.10 A"/>
    <property type="chains" value="1Y/2Y=1-110"/>
</dbReference>
<dbReference type="PDB" id="5DOY">
    <property type="method" value="X-ray"/>
    <property type="resolution" value="2.60 A"/>
    <property type="chains" value="1Y/2Y=1-110"/>
</dbReference>
<dbReference type="PDB" id="5E7K">
    <property type="method" value="X-ray"/>
    <property type="resolution" value="3.20 A"/>
    <property type="chains" value="C5/G8=1-110"/>
</dbReference>
<dbReference type="PDB" id="5E81">
    <property type="method" value="X-ray"/>
    <property type="resolution" value="2.95 A"/>
    <property type="chains" value="C5/G8=1-110"/>
</dbReference>
<dbReference type="PDB" id="5EL4">
    <property type="method" value="X-ray"/>
    <property type="resolution" value="3.15 A"/>
    <property type="chains" value="C5/G8=1-110"/>
</dbReference>
<dbReference type="PDB" id="5EL5">
    <property type="method" value="X-ray"/>
    <property type="resolution" value="3.15 A"/>
    <property type="chains" value="C5/G8=1-110"/>
</dbReference>
<dbReference type="PDB" id="5EL6">
    <property type="method" value="X-ray"/>
    <property type="resolution" value="3.10 A"/>
    <property type="chains" value="C5/G8=1-110"/>
</dbReference>
<dbReference type="PDB" id="5EL7">
    <property type="method" value="X-ray"/>
    <property type="resolution" value="3.15 A"/>
    <property type="chains" value="C5/G8=1-110"/>
</dbReference>
<dbReference type="PDB" id="5F8K">
    <property type="method" value="X-ray"/>
    <property type="resolution" value="2.80 A"/>
    <property type="chains" value="1Y/2Y=1-107"/>
</dbReference>
<dbReference type="PDB" id="5FDU">
    <property type="method" value="X-ray"/>
    <property type="resolution" value="2.90 A"/>
    <property type="chains" value="1Y/2Y=1-107"/>
</dbReference>
<dbReference type="PDB" id="5FDV">
    <property type="method" value="X-ray"/>
    <property type="resolution" value="2.80 A"/>
    <property type="chains" value="1Y/2Y=1-107"/>
</dbReference>
<dbReference type="PDB" id="5HAU">
    <property type="method" value="X-ray"/>
    <property type="resolution" value="3.00 A"/>
    <property type="chains" value="1W/2W=1-110"/>
</dbReference>
<dbReference type="PDB" id="5HCP">
    <property type="method" value="X-ray"/>
    <property type="resolution" value="2.89 A"/>
    <property type="chains" value="1Y/2Y=1-110"/>
</dbReference>
<dbReference type="PDB" id="5HCQ">
    <property type="method" value="X-ray"/>
    <property type="resolution" value="2.80 A"/>
    <property type="chains" value="1Y/2Y=1-110"/>
</dbReference>
<dbReference type="PDB" id="5HCR">
    <property type="method" value="X-ray"/>
    <property type="resolution" value="2.80 A"/>
    <property type="chains" value="1Y/2Y=1-110"/>
</dbReference>
<dbReference type="PDB" id="5HD1">
    <property type="method" value="X-ray"/>
    <property type="resolution" value="2.70 A"/>
    <property type="chains" value="1Y/2Y=1-110"/>
</dbReference>
<dbReference type="PDB" id="5IB7">
    <property type="method" value="X-ray"/>
    <property type="resolution" value="2.99 A"/>
    <property type="chains" value="C5/G8=1-110"/>
</dbReference>
<dbReference type="PDB" id="5IB8">
    <property type="method" value="X-ray"/>
    <property type="resolution" value="3.13 A"/>
    <property type="chains" value="C5/G8=1-110"/>
</dbReference>
<dbReference type="PDB" id="5IBB">
    <property type="method" value="X-ray"/>
    <property type="resolution" value="2.96 A"/>
    <property type="chains" value="C5/G8=1-110"/>
</dbReference>
<dbReference type="PDB" id="5IMQ">
    <property type="method" value="EM"/>
    <property type="resolution" value="3.80 A"/>
    <property type="chains" value="q=1-110"/>
</dbReference>
<dbReference type="PDB" id="5IMR">
    <property type="method" value="EM"/>
    <property type="chains" value="q=1-110"/>
</dbReference>
<dbReference type="PDB" id="5J30">
    <property type="method" value="X-ray"/>
    <property type="resolution" value="3.20 A"/>
    <property type="chains" value="RY/YY=1-110"/>
</dbReference>
<dbReference type="PDB" id="5J3C">
    <property type="method" value="X-ray"/>
    <property type="resolution" value="3.04 A"/>
    <property type="chains" value="RY/YY=1-110"/>
</dbReference>
<dbReference type="PDB" id="5J4B">
    <property type="method" value="X-ray"/>
    <property type="resolution" value="2.60 A"/>
    <property type="chains" value="1Y/2Y=1-110"/>
</dbReference>
<dbReference type="PDB" id="5J4C">
    <property type="method" value="X-ray"/>
    <property type="resolution" value="2.80 A"/>
    <property type="chains" value="1Y/2Y=1-110"/>
</dbReference>
<dbReference type="PDB" id="5J8B">
    <property type="method" value="X-ray"/>
    <property type="resolution" value="2.60 A"/>
    <property type="chains" value="Y=1-110"/>
</dbReference>
<dbReference type="PDB" id="5NDJ">
    <property type="method" value="X-ray"/>
    <property type="resolution" value="3.15 A"/>
    <property type="chains" value="C5/G8=1-110"/>
</dbReference>
<dbReference type="PDB" id="5NDK">
    <property type="method" value="X-ray"/>
    <property type="resolution" value="2.95 A"/>
    <property type="chains" value="C5/G8=1-110"/>
</dbReference>
<dbReference type="PDB" id="5OT7">
    <property type="method" value="EM"/>
    <property type="resolution" value="3.80 A"/>
    <property type="chains" value="z=2-102"/>
</dbReference>
<dbReference type="PDB" id="5UQ7">
    <property type="method" value="EM"/>
    <property type="resolution" value="3.50 A"/>
    <property type="chains" value="Y=1-107"/>
</dbReference>
<dbReference type="PDB" id="5UQ8">
    <property type="method" value="EM"/>
    <property type="resolution" value="3.20 A"/>
    <property type="chains" value="Y=1-107"/>
</dbReference>
<dbReference type="PDB" id="5VP2">
    <property type="method" value="X-ray"/>
    <property type="resolution" value="2.80 A"/>
    <property type="chains" value="1Y/2Y=1-110"/>
</dbReference>
<dbReference type="PDB" id="5VPO">
    <property type="method" value="X-ray"/>
    <property type="resolution" value="3.34 A"/>
    <property type="chains" value="RY/YY=1-110"/>
</dbReference>
<dbReference type="PDB" id="5VPP">
    <property type="method" value="X-ray"/>
    <property type="resolution" value="3.90 A"/>
    <property type="chains" value="RY/YY=1-110"/>
</dbReference>
<dbReference type="PDB" id="5W4K">
    <property type="method" value="X-ray"/>
    <property type="resolution" value="2.70 A"/>
    <property type="chains" value="1Y/2Y=1-110"/>
</dbReference>
<dbReference type="PDB" id="5WIS">
    <property type="method" value="X-ray"/>
    <property type="resolution" value="2.70 A"/>
    <property type="chains" value="1Y/2Y=1-110"/>
</dbReference>
<dbReference type="PDB" id="5WIT">
    <property type="method" value="X-ray"/>
    <property type="resolution" value="2.60 A"/>
    <property type="chains" value="1Y/2Y=1-110"/>
</dbReference>
<dbReference type="PDB" id="5ZLU">
    <property type="method" value="EM"/>
    <property type="resolution" value="3.60 A"/>
    <property type="chains" value="r=1-110"/>
</dbReference>
<dbReference type="PDB" id="6BUW">
    <property type="method" value="X-ray"/>
    <property type="resolution" value="3.50 A"/>
    <property type="chains" value="RY/YY=1-110"/>
</dbReference>
<dbReference type="PDB" id="6BZ6">
    <property type="method" value="X-ray"/>
    <property type="resolution" value="3.18 A"/>
    <property type="chains" value="RY/YY=1-110"/>
</dbReference>
<dbReference type="PDB" id="6BZ7">
    <property type="method" value="X-ray"/>
    <property type="resolution" value="3.68 A"/>
    <property type="chains" value="RY/YY=1-110"/>
</dbReference>
<dbReference type="PDB" id="6BZ8">
    <property type="method" value="X-ray"/>
    <property type="resolution" value="3.74 A"/>
    <property type="chains" value="RY/YY=1-110"/>
</dbReference>
<dbReference type="PDB" id="6C5L">
    <property type="method" value="X-ray"/>
    <property type="resolution" value="3.20 A"/>
    <property type="chains" value="BY/DY=1-110"/>
</dbReference>
<dbReference type="PDB" id="6CAE">
    <property type="method" value="X-ray"/>
    <property type="resolution" value="2.60 A"/>
    <property type="chains" value="1Y/2Y=1-110"/>
</dbReference>
<dbReference type="PDB" id="6CFJ">
    <property type="method" value="X-ray"/>
    <property type="resolution" value="2.80 A"/>
    <property type="chains" value="1Y/2Y=1-110"/>
</dbReference>
<dbReference type="PDB" id="6CFK">
    <property type="method" value="X-ray"/>
    <property type="resolution" value="2.70 A"/>
    <property type="chains" value="1Y/2Y=1-110"/>
</dbReference>
<dbReference type="PDB" id="6CFL">
    <property type="method" value="X-ray"/>
    <property type="resolution" value="2.60 A"/>
    <property type="chains" value="1Y/2Y=1-110"/>
</dbReference>
<dbReference type="PDB" id="6CZR">
    <property type="method" value="X-ray"/>
    <property type="resolution" value="3.14 A"/>
    <property type="chains" value="1Y/2Y=1-107"/>
</dbReference>
<dbReference type="PDB" id="6FKR">
    <property type="method" value="X-ray"/>
    <property type="resolution" value="3.20 A"/>
    <property type="chains" value="1Y/2Y=1-107"/>
</dbReference>
<dbReference type="PDB" id="6GSJ">
    <property type="method" value="X-ray"/>
    <property type="resolution" value="2.96 A"/>
    <property type="chains" value="C5/G8=1-110"/>
</dbReference>
<dbReference type="PDB" id="6GSK">
    <property type="method" value="X-ray"/>
    <property type="resolution" value="3.36 A"/>
    <property type="chains" value="C5/G8=1-110"/>
</dbReference>
<dbReference type="PDB" id="6GSL">
    <property type="method" value="X-ray"/>
    <property type="resolution" value="3.16 A"/>
    <property type="chains" value="C5/G8=1-110"/>
</dbReference>
<dbReference type="PDB" id="6GZQ">
    <property type="method" value="EM"/>
    <property type="resolution" value="3.28 A"/>
    <property type="chains" value="T1=2-103"/>
</dbReference>
<dbReference type="PDB" id="6GZX">
    <property type="method" value="EM"/>
    <property type="resolution" value="4.57 A"/>
    <property type="chains" value="T1/T2=2-103"/>
</dbReference>
<dbReference type="PDB" id="6GZZ">
    <property type="method" value="EM"/>
    <property type="resolution" value="4.13 A"/>
    <property type="chains" value="T1/T2=2-103"/>
</dbReference>
<dbReference type="PDB" id="6N9E">
    <property type="method" value="X-ray"/>
    <property type="resolution" value="3.70 A"/>
    <property type="chains" value="1Y/2Y=1-110"/>
</dbReference>
<dbReference type="PDB" id="6N9F">
    <property type="method" value="X-ray"/>
    <property type="resolution" value="3.70 A"/>
    <property type="chains" value="1Y/2Y=1-110"/>
</dbReference>
<dbReference type="PDB" id="6ND5">
    <property type="method" value="X-ray"/>
    <property type="resolution" value="2.60 A"/>
    <property type="chains" value="1Y/2Y=1-110"/>
</dbReference>
<dbReference type="PDB" id="6ND6">
    <property type="method" value="X-ray"/>
    <property type="resolution" value="2.85 A"/>
    <property type="chains" value="1Y/2Y=1-110"/>
</dbReference>
<dbReference type="PDB" id="6NDK">
    <property type="method" value="X-ray"/>
    <property type="resolution" value="3.64 A"/>
    <property type="chains" value="RY/YY=1-110"/>
</dbReference>
<dbReference type="PDB" id="6NSH">
    <property type="method" value="X-ray"/>
    <property type="resolution" value="3.40 A"/>
    <property type="chains" value="RY/YY=1-110"/>
</dbReference>
<dbReference type="PDB" id="6NTA">
    <property type="method" value="X-ray"/>
    <property type="resolution" value="3.10 A"/>
    <property type="chains" value="RY/YY=1-110"/>
</dbReference>
<dbReference type="PDB" id="6NUO">
    <property type="method" value="X-ray"/>
    <property type="resolution" value="3.20 A"/>
    <property type="chains" value="RY/YY=1-110"/>
</dbReference>
<dbReference type="PDB" id="6NWY">
    <property type="method" value="X-ray"/>
    <property type="resolution" value="3.50 A"/>
    <property type="chains" value="RY/YY=1-110"/>
</dbReference>
<dbReference type="PDB" id="6O3M">
    <property type="method" value="X-ray"/>
    <property type="resolution" value="3.97 A"/>
    <property type="chains" value="RY/YY=1-110"/>
</dbReference>
<dbReference type="PDB" id="6O97">
    <property type="method" value="X-ray"/>
    <property type="resolution" value="2.75 A"/>
    <property type="chains" value="1Y/2Y=1-110"/>
</dbReference>
<dbReference type="PDB" id="6OF1">
    <property type="method" value="X-ray"/>
    <property type="resolution" value="2.80 A"/>
    <property type="chains" value="1Y/2Y=1-110"/>
</dbReference>
<dbReference type="PDB" id="6OF6">
    <property type="method" value="X-ray"/>
    <property type="resolution" value="3.20 A"/>
    <property type="chains" value="RY/YY=1-110"/>
</dbReference>
<dbReference type="PDB" id="6OJ2">
    <property type="method" value="X-ray"/>
    <property type="resolution" value="3.20 A"/>
    <property type="chains" value="RY/YY=1-110"/>
</dbReference>
<dbReference type="PDB" id="6OPE">
    <property type="method" value="X-ray"/>
    <property type="resolution" value="3.10 A"/>
    <property type="chains" value="RY/YY=1-110"/>
</dbReference>
<dbReference type="PDB" id="6ORD">
    <property type="method" value="X-ray"/>
    <property type="resolution" value="3.10 A"/>
    <property type="chains" value="RY/YY=1-110"/>
</dbReference>
<dbReference type="PDB" id="6OSI">
    <property type="method" value="X-ray"/>
    <property type="resolution" value="4.14 A"/>
    <property type="chains" value="RY/YY=1-110"/>
</dbReference>
<dbReference type="PDB" id="6OTR">
    <property type="method" value="X-ray"/>
    <property type="resolution" value="3.12 A"/>
    <property type="chains" value="RY/YY=1-110"/>
</dbReference>
<dbReference type="PDB" id="6OXA">
    <property type="method" value="X-ray"/>
    <property type="resolution" value="3.25 A"/>
    <property type="chains" value="RY/YY=1-110"/>
</dbReference>
<dbReference type="PDB" id="6OXI">
    <property type="method" value="X-ray"/>
    <property type="resolution" value="3.50 A"/>
    <property type="chains" value="RY/YY=1-110"/>
</dbReference>
<dbReference type="PDB" id="6Q95">
    <property type="method" value="EM"/>
    <property type="resolution" value="3.70 A"/>
    <property type="chains" value="U=2-102"/>
</dbReference>
<dbReference type="PDB" id="6QNQ">
    <property type="method" value="X-ray"/>
    <property type="resolution" value="3.50 A"/>
    <property type="chains" value="C5/G8=1-110"/>
</dbReference>
<dbReference type="PDB" id="6QNR">
    <property type="method" value="X-ray"/>
    <property type="resolution" value="3.10 A"/>
    <property type="chains" value="C5/G8=1-110"/>
</dbReference>
<dbReference type="PDB" id="6UCQ">
    <property type="method" value="X-ray"/>
    <property type="resolution" value="3.50 A"/>
    <property type="chains" value="1Y/2Y=1-110"/>
</dbReference>
<dbReference type="PDB" id="6UO1">
    <property type="method" value="X-ray"/>
    <property type="resolution" value="2.95 A"/>
    <property type="chains" value="1Y/2Y=1-110"/>
</dbReference>
<dbReference type="PDB" id="6XHV">
    <property type="method" value="X-ray"/>
    <property type="resolution" value="2.40 A"/>
    <property type="chains" value="1Y/2Y=1-110"/>
</dbReference>
<dbReference type="PDB" id="6XHW">
    <property type="method" value="X-ray"/>
    <property type="resolution" value="2.50 A"/>
    <property type="chains" value="1Y/2Y=1-110"/>
</dbReference>
<dbReference type="PDB" id="6XHX">
    <property type="method" value="X-ray"/>
    <property type="resolution" value="2.55 A"/>
    <property type="chains" value="1Y/2Y=1-110"/>
</dbReference>
<dbReference type="PDB" id="6XHY">
    <property type="method" value="X-ray"/>
    <property type="resolution" value="2.60 A"/>
    <property type="chains" value="1Y/2Y=1-110"/>
</dbReference>
<dbReference type="PDB" id="6XQD">
    <property type="method" value="X-ray"/>
    <property type="resolution" value="2.80 A"/>
    <property type="chains" value="1Y/2Y=1-110"/>
</dbReference>
<dbReference type="PDB" id="6XQE">
    <property type="method" value="X-ray"/>
    <property type="resolution" value="3.00 A"/>
    <property type="chains" value="1Y/2Y=1-110"/>
</dbReference>
<dbReference type="PDB" id="7AZO">
    <property type="method" value="X-ray"/>
    <property type="resolution" value="3.30 A"/>
    <property type="chains" value="L24A/L24B=1-110"/>
</dbReference>
<dbReference type="PDB" id="7AZS">
    <property type="method" value="X-ray"/>
    <property type="resolution" value="3.10 A"/>
    <property type="chains" value="L24A/L24B=1-110"/>
</dbReference>
<dbReference type="PDB" id="7JQL">
    <property type="method" value="X-ray"/>
    <property type="resolution" value="3.00 A"/>
    <property type="chains" value="1Y/2Y=1-110"/>
</dbReference>
<dbReference type="PDB" id="7JQM">
    <property type="method" value="X-ray"/>
    <property type="resolution" value="3.05 A"/>
    <property type="chains" value="1Y/2Y=1-110"/>
</dbReference>
<dbReference type="PDB" id="7LH5">
    <property type="method" value="X-ray"/>
    <property type="resolution" value="3.27 A"/>
    <property type="chains" value="BY/DY=1-110"/>
</dbReference>
<dbReference type="PDB" id="7MD7">
    <property type="method" value="X-ray"/>
    <property type="resolution" value="2.80 A"/>
    <property type="chains" value="1Y/2Y=1-110"/>
</dbReference>
<dbReference type="PDB" id="7RQ8">
    <property type="method" value="X-ray"/>
    <property type="resolution" value="2.50 A"/>
    <property type="chains" value="1Y/2Y=1-110"/>
</dbReference>
<dbReference type="PDB" id="7RQ9">
    <property type="method" value="X-ray"/>
    <property type="resolution" value="2.60 A"/>
    <property type="chains" value="1Y/2Y=1-110"/>
</dbReference>
<dbReference type="PDB" id="7RQA">
    <property type="method" value="X-ray"/>
    <property type="resolution" value="2.40 A"/>
    <property type="chains" value="1Y/2Y=1-110"/>
</dbReference>
<dbReference type="PDB" id="7RQB">
    <property type="method" value="X-ray"/>
    <property type="resolution" value="2.45 A"/>
    <property type="chains" value="1Y/2Y=1-110"/>
</dbReference>
<dbReference type="PDB" id="7RQC">
    <property type="method" value="X-ray"/>
    <property type="resolution" value="2.50 A"/>
    <property type="chains" value="1Y/2Y=1-110"/>
</dbReference>
<dbReference type="PDB" id="7RQD">
    <property type="method" value="X-ray"/>
    <property type="resolution" value="2.50 A"/>
    <property type="chains" value="1Y/2Y=1-110"/>
</dbReference>
<dbReference type="PDB" id="7RQE">
    <property type="method" value="X-ray"/>
    <property type="resolution" value="2.40 A"/>
    <property type="chains" value="1Y/2Y=1-110"/>
</dbReference>
<dbReference type="PDB" id="7U2H">
    <property type="method" value="X-ray"/>
    <property type="resolution" value="2.55 A"/>
    <property type="chains" value="1Y/2Y=1-110"/>
</dbReference>
<dbReference type="PDB" id="7U2I">
    <property type="method" value="X-ray"/>
    <property type="resolution" value="2.55 A"/>
    <property type="chains" value="1Y/2Y=1-110"/>
</dbReference>
<dbReference type="PDB" id="7U2J">
    <property type="method" value="X-ray"/>
    <property type="resolution" value="2.55 A"/>
    <property type="chains" value="1Y/2Y=1-110"/>
</dbReference>
<dbReference type="PDB" id="8CVJ">
    <property type="method" value="X-ray"/>
    <property type="resolution" value="2.40 A"/>
    <property type="chains" value="1Y/2Y=1-110"/>
</dbReference>
<dbReference type="PDB" id="8CVK">
    <property type="method" value="X-ray"/>
    <property type="resolution" value="2.50 A"/>
    <property type="chains" value="1Y/2Y=1-110"/>
</dbReference>
<dbReference type="PDB" id="8CVL">
    <property type="method" value="X-ray"/>
    <property type="resolution" value="2.30 A"/>
    <property type="chains" value="1Y/2Y=1-110"/>
</dbReference>
<dbReference type="PDB" id="8EKB">
    <property type="method" value="X-ray"/>
    <property type="resolution" value="2.70 A"/>
    <property type="chains" value="1Y/2Y=1-110"/>
</dbReference>
<dbReference type="PDB" id="8EV6">
    <property type="method" value="X-ray"/>
    <property type="resolution" value="2.95 A"/>
    <property type="chains" value="1Y/2Y=1-110"/>
</dbReference>
<dbReference type="PDB" id="8EV7">
    <property type="method" value="X-ray"/>
    <property type="resolution" value="2.89 A"/>
    <property type="chains" value="1Y/2Y=1-110"/>
</dbReference>
<dbReference type="PDB" id="8FC1">
    <property type="method" value="X-ray"/>
    <property type="resolution" value="2.50 A"/>
    <property type="chains" value="1Y/2Y=1-110"/>
</dbReference>
<dbReference type="PDB" id="8FC2">
    <property type="method" value="X-ray"/>
    <property type="resolution" value="2.50 A"/>
    <property type="chains" value="1Y/2Y=1-110"/>
</dbReference>
<dbReference type="PDB" id="8FC3">
    <property type="method" value="X-ray"/>
    <property type="resolution" value="2.60 A"/>
    <property type="chains" value="1Y/2Y=1-110"/>
</dbReference>
<dbReference type="PDB" id="8FC4">
    <property type="method" value="X-ray"/>
    <property type="resolution" value="2.45 A"/>
    <property type="chains" value="1Y/2Y=1-110"/>
</dbReference>
<dbReference type="PDB" id="8FC5">
    <property type="method" value="X-ray"/>
    <property type="resolution" value="2.65 A"/>
    <property type="chains" value="1Y/2Y=1-110"/>
</dbReference>
<dbReference type="PDB" id="8FC6">
    <property type="method" value="X-ray"/>
    <property type="resolution" value="2.35 A"/>
    <property type="chains" value="1Y/2Y=1-110"/>
</dbReference>
<dbReference type="PDB" id="8FOM">
    <property type="method" value="X-ray"/>
    <property type="resolution" value="3.58 A"/>
    <property type="chains" value="RY/YY=1-110"/>
</dbReference>
<dbReference type="PDB" id="8FON">
    <property type="method" value="X-ray"/>
    <property type="resolution" value="3.64 A"/>
    <property type="chains" value="RY/YY=1-110"/>
</dbReference>
<dbReference type="PDB" id="8G29">
    <property type="method" value="X-ray"/>
    <property type="resolution" value="2.55 A"/>
    <property type="chains" value="1Y/2Y=1-110"/>
</dbReference>
<dbReference type="PDB" id="8G2A">
    <property type="method" value="X-ray"/>
    <property type="resolution" value="2.45 A"/>
    <property type="chains" value="1Y/2Y=1-110"/>
</dbReference>
<dbReference type="PDB" id="8G2B">
    <property type="method" value="X-ray"/>
    <property type="resolution" value="2.55 A"/>
    <property type="chains" value="1Y/2Y=1-110"/>
</dbReference>
<dbReference type="PDB" id="8G2C">
    <property type="method" value="X-ray"/>
    <property type="resolution" value="2.65 A"/>
    <property type="chains" value="1Y/2Y=1-110"/>
</dbReference>
<dbReference type="PDB" id="8G2D">
    <property type="method" value="X-ray"/>
    <property type="resolution" value="2.70 A"/>
    <property type="chains" value="1Y/2Y=1-110"/>
</dbReference>
<dbReference type="PDB" id="8T8B">
    <property type="method" value="X-ray"/>
    <property type="resolution" value="2.65 A"/>
    <property type="chains" value="1Y/2Y=1-110"/>
</dbReference>
<dbReference type="PDB" id="8T8C">
    <property type="method" value="X-ray"/>
    <property type="resolution" value="2.60 A"/>
    <property type="chains" value="1Y/2Y=1-110"/>
</dbReference>
<dbReference type="PDB" id="8UD6">
    <property type="method" value="X-ray"/>
    <property type="resolution" value="2.70 A"/>
    <property type="chains" value="1Y/2Y=1-110"/>
</dbReference>
<dbReference type="PDB" id="8UD7">
    <property type="method" value="X-ray"/>
    <property type="resolution" value="2.55 A"/>
    <property type="chains" value="1Y/2Y=1-110"/>
</dbReference>
<dbReference type="PDB" id="8UD8">
    <property type="method" value="X-ray"/>
    <property type="resolution" value="2.60 A"/>
    <property type="chains" value="1Y/2Y=1-110"/>
</dbReference>
<dbReference type="PDB" id="8UVR">
    <property type="method" value="X-ray"/>
    <property type="resolution" value="2.60 A"/>
    <property type="chains" value="1Y/2Y=1-110"/>
</dbReference>
<dbReference type="PDB" id="8UVS">
    <property type="method" value="X-ray"/>
    <property type="resolution" value="2.75 A"/>
    <property type="chains" value="1Y/2Y=1-110"/>
</dbReference>
<dbReference type="PDB" id="8VTU">
    <property type="method" value="X-ray"/>
    <property type="resolution" value="2.40 A"/>
    <property type="chains" value="1Y/2Y=1-110"/>
</dbReference>
<dbReference type="PDB" id="8VTV">
    <property type="method" value="X-ray"/>
    <property type="resolution" value="2.55 A"/>
    <property type="chains" value="1Y/2Y=1-110"/>
</dbReference>
<dbReference type="PDB" id="8VTW">
    <property type="method" value="X-ray"/>
    <property type="resolution" value="2.35 A"/>
    <property type="chains" value="1Y/2Y=1-110"/>
</dbReference>
<dbReference type="PDB" id="8VTX">
    <property type="method" value="X-ray"/>
    <property type="resolution" value="2.40 A"/>
    <property type="chains" value="1Y/2Y=1-110"/>
</dbReference>
<dbReference type="PDB" id="8VTY">
    <property type="method" value="X-ray"/>
    <property type="resolution" value="2.60 A"/>
    <property type="chains" value="1Y/2Y=1-110"/>
</dbReference>
<dbReference type="PDB" id="8WV1">
    <property type="method" value="X-ray"/>
    <property type="resolution" value="3.99 A"/>
    <property type="chains" value="T/t=1-107"/>
</dbReference>
<dbReference type="PDB" id="9B00">
    <property type="method" value="X-ray"/>
    <property type="resolution" value="2.80 A"/>
    <property type="chains" value="1Y/2Y=1-110"/>
</dbReference>
<dbReference type="PDB" id="9D0J">
    <property type="method" value="X-ray"/>
    <property type="resolution" value="2.50 A"/>
    <property type="chains" value="1Y/2Y=1-110"/>
</dbReference>
<dbReference type="PDB" id="9D7R">
    <property type="method" value="X-ray"/>
    <property type="resolution" value="2.70 A"/>
    <property type="chains" value="1Y/2Y=1-110"/>
</dbReference>
<dbReference type="PDB" id="9D7S">
    <property type="method" value="X-ray"/>
    <property type="resolution" value="2.85 A"/>
    <property type="chains" value="1Y/2Y=1-110"/>
</dbReference>
<dbReference type="PDB" id="9D7T">
    <property type="method" value="X-ray"/>
    <property type="resolution" value="2.70 A"/>
    <property type="chains" value="1Y/2Y=1-110"/>
</dbReference>
<dbReference type="PDB" id="9DFC">
    <property type="method" value="X-ray"/>
    <property type="resolution" value="2.50 A"/>
    <property type="chains" value="1Y/2Y=1-110"/>
</dbReference>
<dbReference type="PDB" id="9DFD">
    <property type="method" value="X-ray"/>
    <property type="resolution" value="2.60 A"/>
    <property type="chains" value="1Y/2Y=1-110"/>
</dbReference>
<dbReference type="PDB" id="9DFE">
    <property type="method" value="X-ray"/>
    <property type="resolution" value="2.60 A"/>
    <property type="chains" value="1Y/2Y=1-110"/>
</dbReference>
<dbReference type="PDBsum" id="1VVJ"/>
<dbReference type="PDBsum" id="1VY4"/>
<dbReference type="PDBsum" id="1VY5"/>
<dbReference type="PDBsum" id="1VY6"/>
<dbReference type="PDBsum" id="1VY7"/>
<dbReference type="PDBsum" id="4L47"/>
<dbReference type="PDBsum" id="4L71"/>
<dbReference type="PDBsum" id="4LEL"/>
<dbReference type="PDBsum" id="4LFZ"/>
<dbReference type="PDBsum" id="4LNT"/>
<dbReference type="PDBsum" id="4LSK"/>
<dbReference type="PDBsum" id="4LT8"/>
<dbReference type="PDBsum" id="4P6F"/>
<dbReference type="PDBsum" id="4P70"/>
<dbReference type="PDBsum" id="4TUA"/>
<dbReference type="PDBsum" id="4TUB"/>
<dbReference type="PDBsum" id="4TUC"/>
<dbReference type="PDBsum" id="4TUD"/>
<dbReference type="PDBsum" id="4TUE"/>
<dbReference type="PDBsum" id="4V42"/>
<dbReference type="PDBsum" id="4V4P"/>
<dbReference type="PDBsum" id="4V4X"/>
<dbReference type="PDBsum" id="4V4Y"/>
<dbReference type="PDBsum" id="4V4Z"/>
<dbReference type="PDBsum" id="4V51"/>
<dbReference type="PDBsum" id="4V5A"/>
<dbReference type="PDBsum" id="4V5C"/>
<dbReference type="PDBsum" id="4V5D"/>
<dbReference type="PDBsum" id="4V5E"/>
<dbReference type="PDBsum" id="4V5F"/>
<dbReference type="PDBsum" id="4V5G"/>
<dbReference type="PDBsum" id="4V5J"/>
<dbReference type="PDBsum" id="4V5K"/>
<dbReference type="PDBsum" id="4V5L"/>
<dbReference type="PDBsum" id="4V5M"/>
<dbReference type="PDBsum" id="4V5N"/>
<dbReference type="PDBsum" id="4V5P"/>
<dbReference type="PDBsum" id="4V5Q"/>
<dbReference type="PDBsum" id="4V5R"/>
<dbReference type="PDBsum" id="4V5S"/>
<dbReference type="PDBsum" id="4V68"/>
<dbReference type="PDBsum" id="4V6A"/>
<dbReference type="PDBsum" id="4V6F"/>
<dbReference type="PDBsum" id="4V6G"/>
<dbReference type="PDBsum" id="4V7J"/>
<dbReference type="PDBsum" id="4V7K"/>
<dbReference type="PDBsum" id="4V7L"/>
<dbReference type="PDBsum" id="4V7M"/>
<dbReference type="PDBsum" id="4V7W"/>
<dbReference type="PDBsum" id="4V7X"/>
<dbReference type="PDBsum" id="4V7Y"/>
<dbReference type="PDBsum" id="4V7Z"/>
<dbReference type="PDBsum" id="4V87"/>
<dbReference type="PDBsum" id="4V8A"/>
<dbReference type="PDBsum" id="4V8B"/>
<dbReference type="PDBsum" id="4V8C"/>
<dbReference type="PDBsum" id="4V8D"/>
<dbReference type="PDBsum" id="4V8E"/>
<dbReference type="PDBsum" id="4V8F"/>
<dbReference type="PDBsum" id="4V8G"/>
<dbReference type="PDBsum" id="4V8H"/>
<dbReference type="PDBsum" id="4V8I"/>
<dbReference type="PDBsum" id="4V8J"/>
<dbReference type="PDBsum" id="4V8N"/>
<dbReference type="PDBsum" id="4V8O"/>
<dbReference type="PDBsum" id="4V8Q"/>
<dbReference type="PDBsum" id="4V8U"/>
<dbReference type="PDBsum" id="4V8X"/>
<dbReference type="PDBsum" id="4V90"/>
<dbReference type="PDBsum" id="4V95"/>
<dbReference type="PDBsum" id="4V97"/>
<dbReference type="PDBsum" id="4V9A"/>
<dbReference type="PDBsum" id="4V9B"/>
<dbReference type="PDBsum" id="4V9H"/>
<dbReference type="PDBsum" id="4V9I"/>
<dbReference type="PDBsum" id="4V9R"/>
<dbReference type="PDBsum" id="4V9S"/>
<dbReference type="PDBsum" id="4W2E"/>
<dbReference type="PDBsum" id="4W2F"/>
<dbReference type="PDBsum" id="4W2G"/>
<dbReference type="PDBsum" id="4W2H"/>
<dbReference type="PDBsum" id="4W2I"/>
<dbReference type="PDBsum" id="4W4G"/>
<dbReference type="PDBsum" id="4WPO"/>
<dbReference type="PDBsum" id="4WQ1"/>
<dbReference type="PDBsum" id="4WQF"/>
<dbReference type="PDBsum" id="4WQR"/>
<dbReference type="PDBsum" id="4WQU"/>
<dbReference type="PDBsum" id="4WQY"/>
<dbReference type="PDBsum" id="4WR6"/>
<dbReference type="PDBsum" id="4WRA"/>
<dbReference type="PDBsum" id="4WRO"/>
<dbReference type="PDBsum" id="4WSD"/>
<dbReference type="PDBsum" id="4WSM"/>
<dbReference type="PDBsum" id="4WT1"/>
<dbReference type="PDBsum" id="4WT8"/>
<dbReference type="PDBsum" id="4WU1"/>
<dbReference type="PDBsum" id="4WZD"/>
<dbReference type="PDBsum" id="4WZO"/>
<dbReference type="PDBsum" id="4Y4O"/>
<dbReference type="PDBsum" id="4Y4P"/>
<dbReference type="PDBsum" id="4YPB"/>
<dbReference type="PDBsum" id="4YZV"/>
<dbReference type="PDBsum" id="4Z3S"/>
<dbReference type="PDBsum" id="4Z8C"/>
<dbReference type="PDBsum" id="4ZER"/>
<dbReference type="PDBsum" id="4ZSN"/>
<dbReference type="PDBsum" id="5A9Z"/>
<dbReference type="PDBsum" id="5AA0"/>
<dbReference type="PDBsum" id="5CZP"/>
<dbReference type="PDBsum" id="5D8B"/>
<dbReference type="PDBsum" id="5DFE"/>
<dbReference type="PDBsum" id="5DOX"/>
<dbReference type="PDBsum" id="5DOY"/>
<dbReference type="PDBsum" id="5E7K"/>
<dbReference type="PDBsum" id="5E81"/>
<dbReference type="PDBsum" id="5EL4"/>
<dbReference type="PDBsum" id="5EL5"/>
<dbReference type="PDBsum" id="5EL6"/>
<dbReference type="PDBsum" id="5EL7"/>
<dbReference type="PDBsum" id="5F8K"/>
<dbReference type="PDBsum" id="5FDU"/>
<dbReference type="PDBsum" id="5FDV"/>
<dbReference type="PDBsum" id="5HAU"/>
<dbReference type="PDBsum" id="5HCP"/>
<dbReference type="PDBsum" id="5HCQ"/>
<dbReference type="PDBsum" id="5HCR"/>
<dbReference type="PDBsum" id="5HD1"/>
<dbReference type="PDBsum" id="5IB7"/>
<dbReference type="PDBsum" id="5IB8"/>
<dbReference type="PDBsum" id="5IBB"/>
<dbReference type="PDBsum" id="5IMQ"/>
<dbReference type="PDBsum" id="5IMR"/>
<dbReference type="PDBsum" id="5J30"/>
<dbReference type="PDBsum" id="5J3C"/>
<dbReference type="PDBsum" id="5J4B"/>
<dbReference type="PDBsum" id="5J4C"/>
<dbReference type="PDBsum" id="5J8B"/>
<dbReference type="PDBsum" id="5NDJ"/>
<dbReference type="PDBsum" id="5NDK"/>
<dbReference type="PDBsum" id="5OT7"/>
<dbReference type="PDBsum" id="5UQ7"/>
<dbReference type="PDBsum" id="5UQ8"/>
<dbReference type="PDBsum" id="5VP2"/>
<dbReference type="PDBsum" id="5VPO"/>
<dbReference type="PDBsum" id="5VPP"/>
<dbReference type="PDBsum" id="5W4K"/>
<dbReference type="PDBsum" id="5WIS"/>
<dbReference type="PDBsum" id="5WIT"/>
<dbReference type="PDBsum" id="5ZLU"/>
<dbReference type="PDBsum" id="6BUW"/>
<dbReference type="PDBsum" id="6BZ6"/>
<dbReference type="PDBsum" id="6BZ7"/>
<dbReference type="PDBsum" id="6BZ8"/>
<dbReference type="PDBsum" id="6C5L"/>
<dbReference type="PDBsum" id="6CAE"/>
<dbReference type="PDBsum" id="6CFJ"/>
<dbReference type="PDBsum" id="6CFK"/>
<dbReference type="PDBsum" id="6CFL"/>
<dbReference type="PDBsum" id="6CZR"/>
<dbReference type="PDBsum" id="6FKR"/>
<dbReference type="PDBsum" id="6GSJ"/>
<dbReference type="PDBsum" id="6GSK"/>
<dbReference type="PDBsum" id="6GSL"/>
<dbReference type="PDBsum" id="6GZQ"/>
<dbReference type="PDBsum" id="6GZX"/>
<dbReference type="PDBsum" id="6GZZ"/>
<dbReference type="PDBsum" id="6N9E"/>
<dbReference type="PDBsum" id="6N9F"/>
<dbReference type="PDBsum" id="6ND5"/>
<dbReference type="PDBsum" id="6ND6"/>
<dbReference type="PDBsum" id="6NDK"/>
<dbReference type="PDBsum" id="6NSH"/>
<dbReference type="PDBsum" id="6NTA"/>
<dbReference type="PDBsum" id="6NUO"/>
<dbReference type="PDBsum" id="6NWY"/>
<dbReference type="PDBsum" id="6O3M"/>
<dbReference type="PDBsum" id="6O97"/>
<dbReference type="PDBsum" id="6OF1"/>
<dbReference type="PDBsum" id="6OF6"/>
<dbReference type="PDBsum" id="6OJ2"/>
<dbReference type="PDBsum" id="6OPE"/>
<dbReference type="PDBsum" id="6ORD"/>
<dbReference type="PDBsum" id="6OSI"/>
<dbReference type="PDBsum" id="6OTR"/>
<dbReference type="PDBsum" id="6OXA"/>
<dbReference type="PDBsum" id="6OXI"/>
<dbReference type="PDBsum" id="6Q95"/>
<dbReference type="PDBsum" id="6QNQ"/>
<dbReference type="PDBsum" id="6QNR"/>
<dbReference type="PDBsum" id="6UCQ"/>
<dbReference type="PDBsum" id="6UO1"/>
<dbReference type="PDBsum" id="6XHV"/>
<dbReference type="PDBsum" id="6XHW"/>
<dbReference type="PDBsum" id="6XHX"/>
<dbReference type="PDBsum" id="6XHY"/>
<dbReference type="PDBsum" id="6XQD"/>
<dbReference type="PDBsum" id="6XQE"/>
<dbReference type="PDBsum" id="7AZO"/>
<dbReference type="PDBsum" id="7AZS"/>
<dbReference type="PDBsum" id="7JQL"/>
<dbReference type="PDBsum" id="7JQM"/>
<dbReference type="PDBsum" id="7LH5"/>
<dbReference type="PDBsum" id="7MD7"/>
<dbReference type="PDBsum" id="7RQ8"/>
<dbReference type="PDBsum" id="7RQ9"/>
<dbReference type="PDBsum" id="7RQA"/>
<dbReference type="PDBsum" id="7RQB"/>
<dbReference type="PDBsum" id="7RQC"/>
<dbReference type="PDBsum" id="7RQD"/>
<dbReference type="PDBsum" id="7RQE"/>
<dbReference type="PDBsum" id="7U2H"/>
<dbReference type="PDBsum" id="7U2I"/>
<dbReference type="PDBsum" id="7U2J"/>
<dbReference type="PDBsum" id="8CVJ"/>
<dbReference type="PDBsum" id="8CVK"/>
<dbReference type="PDBsum" id="8CVL"/>
<dbReference type="PDBsum" id="8EKB"/>
<dbReference type="PDBsum" id="8EV6"/>
<dbReference type="PDBsum" id="8EV7"/>
<dbReference type="PDBsum" id="8FC1"/>
<dbReference type="PDBsum" id="8FC2"/>
<dbReference type="PDBsum" id="8FC3"/>
<dbReference type="PDBsum" id="8FC4"/>
<dbReference type="PDBsum" id="8FC5"/>
<dbReference type="PDBsum" id="8FC6"/>
<dbReference type="PDBsum" id="8FOM"/>
<dbReference type="PDBsum" id="8FON"/>
<dbReference type="PDBsum" id="8G29"/>
<dbReference type="PDBsum" id="8G2A"/>
<dbReference type="PDBsum" id="8G2B"/>
<dbReference type="PDBsum" id="8G2C"/>
<dbReference type="PDBsum" id="8G2D"/>
<dbReference type="PDBsum" id="8T8B"/>
<dbReference type="PDBsum" id="8T8C"/>
<dbReference type="PDBsum" id="8UD6"/>
<dbReference type="PDBsum" id="8UD7"/>
<dbReference type="PDBsum" id="8UD8"/>
<dbReference type="PDBsum" id="8UVR"/>
<dbReference type="PDBsum" id="8UVS"/>
<dbReference type="PDBsum" id="8VTU"/>
<dbReference type="PDBsum" id="8VTV"/>
<dbReference type="PDBsum" id="8VTW"/>
<dbReference type="PDBsum" id="8VTX"/>
<dbReference type="PDBsum" id="8VTY"/>
<dbReference type="PDBsum" id="8WV1"/>
<dbReference type="PDBsum" id="9B00"/>
<dbReference type="PDBsum" id="9D0J"/>
<dbReference type="PDBsum" id="9D7R"/>
<dbReference type="PDBsum" id="9D7S"/>
<dbReference type="PDBsum" id="9D7T"/>
<dbReference type="PDBsum" id="9DFC"/>
<dbReference type="PDBsum" id="9DFD"/>
<dbReference type="PDBsum" id="9DFE"/>
<dbReference type="EMDB" id="EMD-0101"/>
<dbReference type="EMDB" id="EMD-0104"/>
<dbReference type="EMDB" id="EMD-0105"/>
<dbReference type="EMDB" id="EMD-3852"/>
<dbReference type="EMDB" id="EMD-4475"/>
<dbReference type="EMDB" id="EMD-6934"/>
<dbReference type="EMDB" id="EMD-8596"/>
<dbReference type="EMDB" id="EMD-8597"/>
<dbReference type="SMR" id="Q5SHP9"/>
<dbReference type="IntAct" id="Q5SHP9">
    <property type="interactions" value="7"/>
</dbReference>
<dbReference type="EnsemblBacteria" id="BAD71504">
    <property type="protein sequence ID" value="BAD71504"/>
    <property type="gene ID" value="BAD71504"/>
</dbReference>
<dbReference type="GeneID" id="3169836"/>
<dbReference type="KEGG" id="ttj:TTHA1681"/>
<dbReference type="PATRIC" id="fig|300852.9.peg.1651"/>
<dbReference type="eggNOG" id="COG0198">
    <property type="taxonomic scope" value="Bacteria"/>
</dbReference>
<dbReference type="HOGENOM" id="CLU_093315_2_3_0"/>
<dbReference type="PhylomeDB" id="Q5SHP9"/>
<dbReference type="Proteomes" id="UP000000532">
    <property type="component" value="Chromosome"/>
</dbReference>
<dbReference type="GO" id="GO:1990904">
    <property type="term" value="C:ribonucleoprotein complex"/>
    <property type="evidence" value="ECO:0007669"/>
    <property type="project" value="UniProtKB-KW"/>
</dbReference>
<dbReference type="GO" id="GO:0005840">
    <property type="term" value="C:ribosome"/>
    <property type="evidence" value="ECO:0007669"/>
    <property type="project" value="UniProtKB-KW"/>
</dbReference>
<dbReference type="GO" id="GO:0019843">
    <property type="term" value="F:rRNA binding"/>
    <property type="evidence" value="ECO:0007669"/>
    <property type="project" value="UniProtKB-UniRule"/>
</dbReference>
<dbReference type="GO" id="GO:0003735">
    <property type="term" value="F:structural constituent of ribosome"/>
    <property type="evidence" value="ECO:0007669"/>
    <property type="project" value="InterPro"/>
</dbReference>
<dbReference type="GO" id="GO:0006412">
    <property type="term" value="P:translation"/>
    <property type="evidence" value="ECO:0007669"/>
    <property type="project" value="UniProtKB-UniRule"/>
</dbReference>
<dbReference type="CDD" id="cd06089">
    <property type="entry name" value="KOW_RPL26"/>
    <property type="match status" value="1"/>
</dbReference>
<dbReference type="Gene3D" id="2.30.30.30">
    <property type="match status" value="1"/>
</dbReference>
<dbReference type="HAMAP" id="MF_01326_B">
    <property type="entry name" value="Ribosomal_uL24_B"/>
    <property type="match status" value="1"/>
</dbReference>
<dbReference type="InterPro" id="IPR005824">
    <property type="entry name" value="KOW"/>
</dbReference>
<dbReference type="InterPro" id="IPR014722">
    <property type="entry name" value="Rib_uL2_dom2"/>
</dbReference>
<dbReference type="InterPro" id="IPR003256">
    <property type="entry name" value="Ribosomal_uL24"/>
</dbReference>
<dbReference type="InterPro" id="IPR005825">
    <property type="entry name" value="Ribosomal_uL24_CS"/>
</dbReference>
<dbReference type="InterPro" id="IPR041988">
    <property type="entry name" value="Ribosomal_uL24_KOW"/>
</dbReference>
<dbReference type="InterPro" id="IPR008991">
    <property type="entry name" value="Translation_prot_SH3-like_sf"/>
</dbReference>
<dbReference type="NCBIfam" id="TIGR01079">
    <property type="entry name" value="rplX_bact"/>
    <property type="match status" value="1"/>
</dbReference>
<dbReference type="PANTHER" id="PTHR12903">
    <property type="entry name" value="MITOCHONDRIAL RIBOSOMAL PROTEIN L24"/>
    <property type="match status" value="1"/>
</dbReference>
<dbReference type="Pfam" id="PF00467">
    <property type="entry name" value="KOW"/>
    <property type="match status" value="1"/>
</dbReference>
<dbReference type="Pfam" id="PF17136">
    <property type="entry name" value="ribosomal_L24"/>
    <property type="match status" value="1"/>
</dbReference>
<dbReference type="SMART" id="SM00739">
    <property type="entry name" value="KOW"/>
    <property type="match status" value="1"/>
</dbReference>
<dbReference type="SUPFAM" id="SSF50104">
    <property type="entry name" value="Translation proteins SH3-like domain"/>
    <property type="match status" value="1"/>
</dbReference>
<dbReference type="PROSITE" id="PS01108">
    <property type="entry name" value="RIBOSOMAL_L24"/>
    <property type="match status" value="1"/>
</dbReference>
<organism>
    <name type="scientific">Thermus thermophilus (strain ATCC 27634 / DSM 579 / HB8)</name>
    <dbReference type="NCBI Taxonomy" id="300852"/>
    <lineage>
        <taxon>Bacteria</taxon>
        <taxon>Thermotogati</taxon>
        <taxon>Deinococcota</taxon>
        <taxon>Deinococci</taxon>
        <taxon>Thermales</taxon>
        <taxon>Thermaceae</taxon>
        <taxon>Thermus</taxon>
    </lineage>
</organism>
<comment type="function">
    <text evidence="1">One of two assembly initiator proteins, it binds directly to the 5'-end of the 23S rRNA, where it nucleates assembly of the 50S subunit.</text>
</comment>
<comment type="function">
    <text>One of the proteins that surrounds the polypeptide exit tunnel on the outside of the subunit.</text>
</comment>
<comment type="subunit">
    <text>Part of the 50S ribosomal subunit.</text>
</comment>
<comment type="mass spectrometry"/>
<comment type="similarity">
    <text evidence="3">Belongs to the universal ribosomal protein uL24 family.</text>
</comment>
<sequence>MRVKMHVKKGDTVLVASGKYKGRVGKVKEVLPKKYAVIVEGVNIVKKAVRVSPKYPQGGFIEKEAPLHASKVRPICPACGKPTRVRKKFLENGKKIRVCAKCGGALDTEE</sequence>
<feature type="chain" id="PRO_0000130741" description="Large ribosomal subunit protein uL24">
    <location>
        <begin position="1"/>
        <end position="110"/>
    </location>
</feature>
<feature type="strand" evidence="4">
    <location>
        <begin position="13"/>
        <end position="15"/>
    </location>
</feature>
<feature type="strand" evidence="4">
    <location>
        <begin position="51"/>
        <end position="55"/>
    </location>
</feature>
<feature type="strand" evidence="4">
    <location>
        <begin position="71"/>
        <end position="74"/>
    </location>
</feature>
<feature type="strand" evidence="4">
    <location>
        <begin position="76"/>
        <end position="79"/>
    </location>
</feature>
<feature type="strand" evidence="4">
    <location>
        <begin position="83"/>
        <end position="86"/>
    </location>
</feature>
<feature type="turn" evidence="4">
    <location>
        <begin position="88"/>
        <end position="90"/>
    </location>
</feature>
<feature type="strand" evidence="4">
    <location>
        <begin position="93"/>
        <end position="96"/>
    </location>
</feature>
<evidence type="ECO:0000250" key="1"/>
<evidence type="ECO:0000269" key="2">
    <source>
    </source>
</evidence>
<evidence type="ECO:0000305" key="3"/>
<evidence type="ECO:0007829" key="4">
    <source>
        <dbReference type="PDB" id="4WT8"/>
    </source>
</evidence>
<accession>Q5SHP9</accession>
<reference key="1">
    <citation type="submission" date="2004-11" db="EMBL/GenBank/DDBJ databases">
        <title>Complete genome sequence of Thermus thermophilus HB8.</title>
        <authorList>
            <person name="Masui R."/>
            <person name="Kurokawa K."/>
            <person name="Nakagawa N."/>
            <person name="Tokunaga F."/>
            <person name="Koyama Y."/>
            <person name="Shibata T."/>
            <person name="Oshima T."/>
            <person name="Yokoyama S."/>
            <person name="Yasunaga T."/>
            <person name="Kuramitsu S."/>
        </authorList>
    </citation>
    <scope>NUCLEOTIDE SEQUENCE [LARGE SCALE GENOMIC DNA]</scope>
    <source>
        <strain>ATCC 27634 / DSM 579 / HB8</strain>
    </source>
</reference>
<reference key="2">
    <citation type="journal article" date="1995" name="Endocyt. Cell Res.">
        <title>The isolation and complete amino acid sequence of the ribosomal protein L36 from Thermus thermophilus and its zinc-binding motif.</title>
        <authorList>
            <person name="Boysen R.I."/>
            <person name="Lorenz S."/>
            <person name="Kim J.S."/>
            <person name="Schroeder W.F.K.J."/>
            <person name="Erdmann V.A."/>
        </authorList>
    </citation>
    <scope>PROTEIN SEQUENCE OF 1-44</scope>
</reference>
<reference key="3">
    <citation type="journal article" date="2000" name="Biol. Chem.">
        <title>Identification of the 50S ribosomal proteins from the eubacterium Thermus thermophilus.</title>
        <authorList>
            <person name="Katsani K.R."/>
            <person name="Tsiboli P."/>
            <person name="Anagnostopoulos K."/>
            <person name="Urlaub H."/>
            <person name="Choli-Papadopoulou T."/>
        </authorList>
    </citation>
    <scope>PROTEIN SEQUENCE OF 1-24</scope>
    <source>
        <strain>ATCC 27634 / DSM 579 / HB8</strain>
    </source>
</reference>
<reference key="4">
    <citation type="journal article" date="2005" name="Proteomics">
        <title>Extending ribosomal protein identifications to unsequenced bacterial strains using matrix-assisted laser desorption/ionization mass spectrometry.</title>
        <authorList>
            <person name="Suh M.-J."/>
            <person name="Hamburg D.M."/>
            <person name="Gregory S.T."/>
            <person name="Dahlberg A.E."/>
            <person name="Limbach P.A."/>
        </authorList>
    </citation>
    <scope>MASS SPECTROMETRY</scope>
    <source>
        <strain>ATCC 27634 / DSM 579 / HB8</strain>
    </source>
</reference>
<reference key="5">
    <citation type="journal article" date="2001" name="Cell">
        <title>The path of messenger RNA through the ribosome.</title>
        <authorList>
            <person name="Yusupova G.Z."/>
            <person name="Yusupov M.M."/>
            <person name="Cate J.H.D."/>
            <person name="Noller H.F."/>
        </authorList>
    </citation>
    <scope>X-RAY CRYSTALLOGRAPHY (5.0 ANGSTROMS) OF THE RIBOSOME</scope>
</reference>
<reference key="6">
    <citation type="journal article" date="2001" name="Science">
        <title>Crystal structure of the ribosome at 5.5 A resolution.</title>
        <authorList>
            <person name="Yusupov M.M."/>
            <person name="Yusupova G.Z."/>
            <person name="Baucom A."/>
            <person name="Lieberman K."/>
            <person name="Earnest T.N."/>
            <person name="Cate J.H.D."/>
            <person name="Noller H.F."/>
        </authorList>
    </citation>
    <scope>X-RAY CRYSTALLOGRAPHY (5.5 ANGSTROMS) OF THE RIBOSOME</scope>
</reference>
<reference key="7">
    <citation type="journal article" date="2008" name="Science">
        <title>Insights into translational termination from the structure of RF2 bound to the ribosome.</title>
        <authorList>
            <person name="Weixlbaumer A."/>
            <person name="Jin H."/>
            <person name="Neubauer C."/>
            <person name="Voorhees R.M."/>
            <person name="Petry S."/>
            <person name="Kelley A.C."/>
            <person name="Ramakrishnan V."/>
        </authorList>
    </citation>
    <scope>X-RAY CRYSTALLOGRAPHY (3.45 ANGSTROMS) OF 70S RIBOSOME IN COMPLEX WITH RF2</scope>
    <scope>SUBUNIT</scope>
</reference>
<reference key="8">
    <citation type="journal article" date="2010" name="Proc. Natl. Acad. Sci. U.S.A.">
        <title>Structure of the 70S ribosome bound to release factor 2 and a substrate analog provides insights into catalysis of peptide release.</title>
        <authorList>
            <person name="Jin H."/>
            <person name="Kelley A.C."/>
            <person name="Loakes D."/>
            <person name="Ramakrishnan V."/>
        </authorList>
    </citation>
    <scope>X-RAY CRYSTALLOGRAPHY (3.10 ANGSTROMS) OF 70S RIBOSOME IN COMPLEX WITH RF2</scope>
    <scope>SUBUNIT</scope>
</reference>